<dbReference type="EMBL" id="DQ066263">
    <property type="protein sequence ID" value="AAY66900.1"/>
    <property type="molecule type" value="mRNA"/>
</dbReference>
<dbReference type="SMR" id="Q4PM64"/>
<dbReference type="FunCoup" id="Q4PM64">
    <property type="interactions" value="1153"/>
</dbReference>
<dbReference type="EnsemblMetazoa" id="XM_029970980.3">
    <property type="protein sequence ID" value="XP_029826840.1"/>
    <property type="gene ID" value="LOC8036764"/>
</dbReference>
<dbReference type="VEuPathDB" id="VectorBase:ISCP_009673"/>
<dbReference type="InParanoid" id="Q4PM64"/>
<dbReference type="OMA" id="GESDACM"/>
<dbReference type="OrthoDB" id="278325at2759"/>
<dbReference type="Proteomes" id="UP000001555">
    <property type="component" value="Unplaced"/>
</dbReference>
<dbReference type="GO" id="GO:0022627">
    <property type="term" value="C:cytosolic small ribosomal subunit"/>
    <property type="evidence" value="ECO:0000318"/>
    <property type="project" value="GO_Central"/>
</dbReference>
<dbReference type="GO" id="GO:0005791">
    <property type="term" value="C:rough endoplasmic reticulum"/>
    <property type="evidence" value="ECO:0007669"/>
    <property type="project" value="UniProtKB-SubCell"/>
</dbReference>
<dbReference type="GO" id="GO:0003735">
    <property type="term" value="F:structural constituent of ribosome"/>
    <property type="evidence" value="ECO:0000318"/>
    <property type="project" value="GO_Central"/>
</dbReference>
<dbReference type="GO" id="GO:0000447">
    <property type="term" value="P:endonucleolytic cleavage in ITS1 to separate SSU-rRNA from 5.8S rRNA and LSU-rRNA from tricistronic rRNA transcript (SSU-rRNA, 5.8S rRNA, LSU-rRNA)"/>
    <property type="evidence" value="ECO:0000318"/>
    <property type="project" value="GO_Central"/>
</dbReference>
<dbReference type="GO" id="GO:0000461">
    <property type="term" value="P:endonucleolytic cleavage to generate mature 3'-end of SSU-rRNA from (SSU-rRNA, 5.8S rRNA, LSU-rRNA)"/>
    <property type="evidence" value="ECO:0000318"/>
    <property type="project" value="GO_Central"/>
</dbReference>
<dbReference type="GO" id="GO:0006412">
    <property type="term" value="P:translation"/>
    <property type="evidence" value="ECO:0007669"/>
    <property type="project" value="InterPro"/>
</dbReference>
<dbReference type="FunFam" id="3.30.1230.20:FF:000001">
    <property type="entry name" value="40S ribosomal protein S21"/>
    <property type="match status" value="1"/>
</dbReference>
<dbReference type="Gene3D" id="3.30.1230.20">
    <property type="match status" value="1"/>
</dbReference>
<dbReference type="InterPro" id="IPR001931">
    <property type="entry name" value="Ribosomal_eS21"/>
</dbReference>
<dbReference type="InterPro" id="IPR018279">
    <property type="entry name" value="Ribosomal_eS21_CS"/>
</dbReference>
<dbReference type="InterPro" id="IPR038579">
    <property type="entry name" value="Ribosomal_eS21_sf"/>
</dbReference>
<dbReference type="PANTHER" id="PTHR10442">
    <property type="entry name" value="40S RIBOSOMAL PROTEIN S21"/>
    <property type="match status" value="1"/>
</dbReference>
<dbReference type="Pfam" id="PF01249">
    <property type="entry name" value="Ribosomal_S21e"/>
    <property type="match status" value="1"/>
</dbReference>
<dbReference type="PIRSF" id="PIRSF002148">
    <property type="entry name" value="Ribosomal_S21e"/>
    <property type="match status" value="1"/>
</dbReference>
<dbReference type="PROSITE" id="PS00996">
    <property type="entry name" value="RIBOSOMAL_S21E"/>
    <property type="match status" value="1"/>
</dbReference>
<accession>Q4PM64</accession>
<proteinExistence type="inferred from homology"/>
<sequence>MQNEAGEYVDLYIPRKCSTSNRIIHAKDHASIQINLAIVDEQSGRATGETKPYAICGAIRRMGESDDCITRLAKDDGYIPKDF</sequence>
<organism>
    <name type="scientific">Ixodes scapularis</name>
    <name type="common">Black-legged tick</name>
    <name type="synonym">Deer tick</name>
    <dbReference type="NCBI Taxonomy" id="6945"/>
    <lineage>
        <taxon>Eukaryota</taxon>
        <taxon>Metazoa</taxon>
        <taxon>Ecdysozoa</taxon>
        <taxon>Arthropoda</taxon>
        <taxon>Chelicerata</taxon>
        <taxon>Arachnida</taxon>
        <taxon>Acari</taxon>
        <taxon>Parasitiformes</taxon>
        <taxon>Ixodida</taxon>
        <taxon>Ixodoidea</taxon>
        <taxon>Ixodidae</taxon>
        <taxon>Ixodinae</taxon>
        <taxon>Ixodes</taxon>
    </lineage>
</organism>
<keyword id="KW-0963">Cytoplasm</keyword>
<keyword id="KW-0256">Endoplasmic reticulum</keyword>
<keyword id="KW-1185">Reference proteome</keyword>
<keyword id="KW-0687">Ribonucleoprotein</keyword>
<keyword id="KW-0689">Ribosomal protein</keyword>
<feature type="chain" id="PRO_0000194743" description="Small ribosomal subunit protein eS21">
    <location>
        <begin position="1"/>
        <end position="83"/>
    </location>
</feature>
<evidence type="ECO:0000250" key="1">
    <source>
        <dbReference type="UniProtKB" id="P63220"/>
    </source>
</evidence>
<evidence type="ECO:0000250" key="2">
    <source>
        <dbReference type="UniProtKB" id="P63221"/>
    </source>
</evidence>
<evidence type="ECO:0000305" key="3"/>
<protein>
    <recommendedName>
        <fullName evidence="3">Small ribosomal subunit protein eS21</fullName>
    </recommendedName>
    <alternativeName>
        <fullName>40S ribosomal protein S21</fullName>
    </alternativeName>
</protein>
<name>RS21_IXOSC</name>
<gene>
    <name type="primary">RpS21</name>
</gene>
<reference key="1">
    <citation type="journal article" date="2006" name="Insect Biochem. Mol. Biol.">
        <title>An annotated catalog of salivary gland transcripts from Ixodes scapularis ticks.</title>
        <authorList>
            <person name="Ribeiro J.M.C."/>
            <person name="Alarcon-Chaidez F."/>
            <person name="Francischetti I.M.B."/>
            <person name="Mans B.J."/>
            <person name="Mather T.N."/>
            <person name="Valenzuela J.G."/>
            <person name="Wikel S.K."/>
        </authorList>
    </citation>
    <scope>NUCLEOTIDE SEQUENCE [LARGE SCALE MRNA]</scope>
    <source>
        <strain>ISN-L-126</strain>
        <tissue>Salivary gland</tissue>
    </source>
</reference>
<comment type="subunit">
    <text evidence="1">Component of the 40S small ribosomal subunit.</text>
</comment>
<comment type="subcellular location">
    <subcellularLocation>
        <location evidence="1">Cytoplasm</location>
        <location evidence="1">Cytosol</location>
    </subcellularLocation>
    <subcellularLocation>
        <location evidence="1">Cytoplasm</location>
    </subcellularLocation>
    <subcellularLocation>
        <location evidence="2">Rough endoplasmic reticulum</location>
    </subcellularLocation>
    <text evidence="1 2">Detected on cytosolic polysomes (By similarity). Detected in ribosomes that are associated with the rough endoplasmic reticulum (By similarity).</text>
</comment>
<comment type="similarity">
    <text evidence="3">Belongs to the eukaryotic ribosomal protein eS21 family.</text>
</comment>